<organism>
    <name type="scientific">Phocaeicola vulgatus (strain ATCC 8482 / DSM 1447 / JCM 5826 / CCUG 4940 / NBRC 14291 / NCTC 11154)</name>
    <name type="common">Bacteroides vulgatus</name>
    <dbReference type="NCBI Taxonomy" id="435590"/>
    <lineage>
        <taxon>Bacteria</taxon>
        <taxon>Pseudomonadati</taxon>
        <taxon>Bacteroidota</taxon>
        <taxon>Bacteroidia</taxon>
        <taxon>Bacteroidales</taxon>
        <taxon>Bacteroidaceae</taxon>
        <taxon>Phocaeicola</taxon>
    </lineage>
</organism>
<keyword id="KW-0963">Cytoplasm</keyword>
<keyword id="KW-0570">Pentose shunt</keyword>
<keyword id="KW-0704">Schiff base</keyword>
<keyword id="KW-0808">Transferase</keyword>
<name>TAL_PHOV8</name>
<reference key="1">
    <citation type="journal article" date="2007" name="PLoS Biol.">
        <title>Evolution of symbiotic bacteria in the distal human intestine.</title>
        <authorList>
            <person name="Xu J."/>
            <person name="Mahowald M.A."/>
            <person name="Ley R.E."/>
            <person name="Lozupone C.A."/>
            <person name="Hamady M."/>
            <person name="Martens E.C."/>
            <person name="Henrissat B."/>
            <person name="Coutinho P.M."/>
            <person name="Minx P."/>
            <person name="Latreille P."/>
            <person name="Cordum H."/>
            <person name="Van Brunt A."/>
            <person name="Kim K."/>
            <person name="Fulton R.S."/>
            <person name="Fulton L.A."/>
            <person name="Clifton S.W."/>
            <person name="Wilson R.K."/>
            <person name="Knight R.D."/>
            <person name="Gordon J.I."/>
        </authorList>
    </citation>
    <scope>NUCLEOTIDE SEQUENCE [LARGE SCALE GENOMIC DNA]</scope>
    <source>
        <strain>ATCC 8482 / DSM 1447 / JCM 5826 / CCUG 4940 / NBRC 14291 / NCTC 11154</strain>
    </source>
</reference>
<feature type="chain" id="PRO_1000126279" description="Probable transaldolase">
    <location>
        <begin position="1"/>
        <end position="218"/>
    </location>
</feature>
<feature type="active site" description="Schiff-base intermediate with substrate" evidence="1">
    <location>
        <position position="87"/>
    </location>
</feature>
<proteinExistence type="inferred from homology"/>
<accession>A6L5J5</accession>
<comment type="function">
    <text evidence="1">Transaldolase is important for the balance of metabolites in the pentose-phosphate pathway.</text>
</comment>
<comment type="catalytic activity">
    <reaction evidence="1">
        <text>D-sedoheptulose 7-phosphate + D-glyceraldehyde 3-phosphate = D-erythrose 4-phosphate + beta-D-fructose 6-phosphate</text>
        <dbReference type="Rhea" id="RHEA:17053"/>
        <dbReference type="ChEBI" id="CHEBI:16897"/>
        <dbReference type="ChEBI" id="CHEBI:57483"/>
        <dbReference type="ChEBI" id="CHEBI:57634"/>
        <dbReference type="ChEBI" id="CHEBI:59776"/>
        <dbReference type="EC" id="2.2.1.2"/>
    </reaction>
</comment>
<comment type="pathway">
    <text evidence="1">Carbohydrate degradation; pentose phosphate pathway; D-glyceraldehyde 3-phosphate and beta-D-fructose 6-phosphate from D-ribose 5-phosphate and D-xylulose 5-phosphate (non-oxidative stage): step 2/3.</text>
</comment>
<comment type="subcellular location">
    <subcellularLocation>
        <location evidence="1">Cytoplasm</location>
    </subcellularLocation>
</comment>
<comment type="similarity">
    <text evidence="1">Belongs to the transaldolase family. Type 3B subfamily.</text>
</comment>
<evidence type="ECO:0000255" key="1">
    <source>
        <dbReference type="HAMAP-Rule" id="MF_00494"/>
    </source>
</evidence>
<sequence length="218" mass="23526">MKFFIDTANLEQIREANALGVLDGVTTNPSLMAKEGIKGVENQHKHYIEICNIVDGDVSAEVIATNYEGMIKEGEELAALNPHIVVKVPCIEDGIKAIKYFSNKGIRTNCTLVFSAGQALLAAKAGATYVSPFVGRLDDICNDGVGLVAQIVELYQTYDYKTQVLAASIRNTLHILQCAEVGADVVTCPLSAIKGLLNHPLTDIGLEKFLADYKKVNG</sequence>
<dbReference type="EC" id="2.2.1.2" evidence="1"/>
<dbReference type="EMBL" id="CP000139">
    <property type="protein sequence ID" value="ABR40959.1"/>
    <property type="molecule type" value="Genomic_DNA"/>
</dbReference>
<dbReference type="SMR" id="A6L5J5"/>
<dbReference type="STRING" id="435590.BVU_3333"/>
<dbReference type="PaxDb" id="435590-BVU_3333"/>
<dbReference type="GeneID" id="5304294"/>
<dbReference type="KEGG" id="bvu:BVU_3333"/>
<dbReference type="eggNOG" id="COG0176">
    <property type="taxonomic scope" value="Bacteria"/>
</dbReference>
<dbReference type="HOGENOM" id="CLU_079764_0_0_10"/>
<dbReference type="BioCyc" id="BVUL435590:G1G59-3455-MONOMER"/>
<dbReference type="UniPathway" id="UPA00115">
    <property type="reaction ID" value="UER00414"/>
</dbReference>
<dbReference type="Proteomes" id="UP000002861">
    <property type="component" value="Chromosome"/>
</dbReference>
<dbReference type="GO" id="GO:0005737">
    <property type="term" value="C:cytoplasm"/>
    <property type="evidence" value="ECO:0007669"/>
    <property type="project" value="UniProtKB-SubCell"/>
</dbReference>
<dbReference type="GO" id="GO:0016832">
    <property type="term" value="F:aldehyde-lyase activity"/>
    <property type="evidence" value="ECO:0007669"/>
    <property type="project" value="InterPro"/>
</dbReference>
<dbReference type="GO" id="GO:0004801">
    <property type="term" value="F:transaldolase activity"/>
    <property type="evidence" value="ECO:0007669"/>
    <property type="project" value="UniProtKB-UniRule"/>
</dbReference>
<dbReference type="GO" id="GO:0005975">
    <property type="term" value="P:carbohydrate metabolic process"/>
    <property type="evidence" value="ECO:0007669"/>
    <property type="project" value="InterPro"/>
</dbReference>
<dbReference type="GO" id="GO:0006098">
    <property type="term" value="P:pentose-phosphate shunt"/>
    <property type="evidence" value="ECO:0007669"/>
    <property type="project" value="UniProtKB-UniRule"/>
</dbReference>
<dbReference type="CDD" id="cd00956">
    <property type="entry name" value="Transaldolase_FSA"/>
    <property type="match status" value="1"/>
</dbReference>
<dbReference type="FunFam" id="3.20.20.70:FF:000018">
    <property type="entry name" value="Probable transaldolase"/>
    <property type="match status" value="1"/>
</dbReference>
<dbReference type="Gene3D" id="3.20.20.70">
    <property type="entry name" value="Aldolase class I"/>
    <property type="match status" value="1"/>
</dbReference>
<dbReference type="HAMAP" id="MF_00494">
    <property type="entry name" value="Transaldolase_3b"/>
    <property type="match status" value="1"/>
</dbReference>
<dbReference type="InterPro" id="IPR013785">
    <property type="entry name" value="Aldolase_TIM"/>
</dbReference>
<dbReference type="InterPro" id="IPR001585">
    <property type="entry name" value="TAL/FSA"/>
</dbReference>
<dbReference type="InterPro" id="IPR022999">
    <property type="entry name" value="Transaldolase_3B"/>
</dbReference>
<dbReference type="InterPro" id="IPR004731">
    <property type="entry name" value="Transaldolase_3B/F6P_aldolase"/>
</dbReference>
<dbReference type="InterPro" id="IPR018225">
    <property type="entry name" value="Transaldolase_AS"/>
</dbReference>
<dbReference type="InterPro" id="IPR033919">
    <property type="entry name" value="TSA/FSA_arc/bac"/>
</dbReference>
<dbReference type="NCBIfam" id="TIGR00875">
    <property type="entry name" value="fsa_talC_mipB"/>
    <property type="match status" value="1"/>
</dbReference>
<dbReference type="PANTHER" id="PTHR10683:SF40">
    <property type="entry name" value="FRUCTOSE-6-PHOSPHATE ALDOLASE 1-RELATED"/>
    <property type="match status" value="1"/>
</dbReference>
<dbReference type="PANTHER" id="PTHR10683">
    <property type="entry name" value="TRANSALDOLASE"/>
    <property type="match status" value="1"/>
</dbReference>
<dbReference type="Pfam" id="PF00923">
    <property type="entry name" value="TAL_FSA"/>
    <property type="match status" value="1"/>
</dbReference>
<dbReference type="SUPFAM" id="SSF51569">
    <property type="entry name" value="Aldolase"/>
    <property type="match status" value="1"/>
</dbReference>
<dbReference type="PROSITE" id="PS01054">
    <property type="entry name" value="TRANSALDOLASE_1"/>
    <property type="match status" value="1"/>
</dbReference>
<protein>
    <recommendedName>
        <fullName evidence="1">Probable transaldolase</fullName>
        <ecNumber evidence="1">2.2.1.2</ecNumber>
    </recommendedName>
</protein>
<gene>
    <name evidence="1" type="primary">tal</name>
    <name type="ordered locus">BVU_3333</name>
</gene>